<sequence length="118" mass="13992">NTVSSFQDILMRMSKMQLGTSSEDLNGMITQFESLKLYRDSLGEAVMRMGDLHSLQSRSGKWREQLSQKFEEIRWLIEEVRHRLKITENSFEQITFMQALQLLLEVEQEIRTFSFQLI</sequence>
<evidence type="ECO:0000250" key="1"/>
<evidence type="ECO:0000305" key="2"/>
<organismHost>
    <name type="scientific">Aves</name>
    <dbReference type="NCBI Taxonomy" id="8782"/>
</organismHost>
<organismHost>
    <name type="scientific">Equus caballus</name>
    <name type="common">Horse</name>
    <dbReference type="NCBI Taxonomy" id="9796"/>
</organismHost>
<dbReference type="EMBL" id="M16565">
    <property type="protein sequence ID" value="AAA43513.1"/>
    <property type="molecule type" value="Genomic_RNA"/>
</dbReference>
<dbReference type="SMR" id="P08271"/>
<dbReference type="GO" id="GO:0042025">
    <property type="term" value="C:host cell nucleus"/>
    <property type="evidence" value="ECO:0007669"/>
    <property type="project" value="UniProtKB-SubCell"/>
</dbReference>
<dbReference type="GO" id="GO:0044423">
    <property type="term" value="C:virion component"/>
    <property type="evidence" value="ECO:0007669"/>
    <property type="project" value="UniProtKB-KW"/>
</dbReference>
<dbReference type="GO" id="GO:0039675">
    <property type="term" value="P:exit of virus from host cell nucleus through nuclear pore"/>
    <property type="evidence" value="ECO:0007669"/>
    <property type="project" value="InterPro"/>
</dbReference>
<dbReference type="Gene3D" id="1.10.287.230">
    <property type="match status" value="1"/>
</dbReference>
<dbReference type="InterPro" id="IPR000968">
    <property type="entry name" value="Flu_NS2"/>
</dbReference>
<dbReference type="Pfam" id="PF00601">
    <property type="entry name" value="Flu_NS2"/>
    <property type="match status" value="1"/>
</dbReference>
<dbReference type="SUPFAM" id="SSF101156">
    <property type="entry name" value="Nonstructural protein ns2, Nep, M1-binding domain"/>
    <property type="match status" value="1"/>
</dbReference>
<keyword id="KW-0025">Alternative splicing</keyword>
<keyword id="KW-1048">Host nucleus</keyword>
<keyword id="KW-0945">Host-virus interaction</keyword>
<keyword id="KW-0813">Transport</keyword>
<keyword id="KW-0946">Virion</keyword>
<organism>
    <name type="scientific">Influenza A virus (strain A/Duck/Ukraine/1/1963 H3N8)</name>
    <dbReference type="NCBI Taxonomy" id="385580"/>
    <lineage>
        <taxon>Viruses</taxon>
        <taxon>Riboviria</taxon>
        <taxon>Orthornavirae</taxon>
        <taxon>Negarnaviricota</taxon>
        <taxon>Polyploviricotina</taxon>
        <taxon>Insthoviricetes</taxon>
        <taxon>Articulavirales</taxon>
        <taxon>Orthomyxoviridae</taxon>
        <taxon>Alphainfluenzavirus</taxon>
        <taxon>Alphainfluenzavirus influenzae</taxon>
        <taxon>Influenza A virus</taxon>
    </lineage>
</organism>
<name>NEP_I63A3</name>
<gene>
    <name type="primary">NS</name>
</gene>
<proteinExistence type="inferred from homology"/>
<accession>P08271</accession>
<reference key="1">
    <citation type="journal article" date="1987" name="Virology">
        <title>Genetic divergence of the NS genes of avian influenza viruses.</title>
        <authorList>
            <person name="Nakajima K."/>
            <person name="Nobusawa E."/>
            <person name="Ogawa T."/>
            <person name="Nakajima S."/>
        </authorList>
    </citation>
    <scope>NUCLEOTIDE SEQUENCE [GENOMIC RNA]</scope>
</reference>
<comment type="function">
    <text evidence="1">Mediates the nuclear export of encapsidated genomic RNAs (ribonucleoproteins, RNPs). Acts as an adapter between viral RNPs complexes and the nuclear export machinery of the cell. Possesses no intrinsic RNA-binding activity, but includes a C-terminal M1-binding domain. This domain is believed to allow recognition of RNPs to which the M1 protein is bound. Because the M1 protein is not available in large quantities until the later stages of infection, such an indirect recognition mechanism probably ensures that genomic RNPs are not exported from the nucleus before sufficient quantities of viral mRNA and progeny genomic RNA have been synthesized. Furthermore, the RNPs enters the cytoplasm only when they have associated with the M1 protein that is necessary to guide them to the plasma membrane. May down-regulate viral RNA synthesis when overproduced (By similarity).</text>
</comment>
<comment type="subunit">
    <text evidence="1">Binds M1 protein. May interact with human nucleoporin RAB/HRB and exportin XPO1/CRM1 (By similarity).</text>
</comment>
<comment type="subcellular location">
    <subcellularLocation>
        <location evidence="2">Virion</location>
    </subcellularLocation>
    <subcellularLocation>
        <location evidence="1">Host nucleus</location>
    </subcellularLocation>
</comment>
<comment type="alternative products">
    <event type="alternative splicing"/>
    <isoform>
        <id>P08271-1</id>
        <name>NEP</name>
        <name>NS2</name>
        <sequence type="displayed"/>
    </isoform>
    <isoform>
        <id>P08270-1</id>
        <name>NS1</name>
        <sequence type="external"/>
    </isoform>
</comment>
<comment type="miscellaneous">
    <text>Average number present in a viral particle is estimated to be 130-200 molecules.</text>
</comment>
<comment type="similarity">
    <text evidence="2">Belongs to the influenza viruses NEP family.</text>
</comment>
<feature type="chain" id="PRO_0000078984" description="Nuclear export protein">
    <location>
        <begin position="1" status="less than"/>
        <end position="118"/>
    </location>
</feature>
<feature type="short sequence motif" description="Nuclear export signal" evidence="1">
    <location>
        <begin position="9"/>
        <end position="18"/>
    </location>
</feature>
<feature type="short sequence motif" description="Nuclear export signal" evidence="1">
    <location>
        <begin position="82"/>
        <end position="91"/>
    </location>
</feature>
<feature type="non-terminal residue">
    <location>
        <position position="1"/>
    </location>
</feature>
<protein>
    <recommendedName>
        <fullName>Nuclear export protein</fullName>
        <shortName>NEP</shortName>
    </recommendedName>
    <alternativeName>
        <fullName>Non-structural protein 2</fullName>
        <shortName>NS2</shortName>
    </alternativeName>
</protein>